<name>NTDP_BACCR</name>
<gene>
    <name type="ordered locus">BC_0508</name>
</gene>
<sequence length="176" mass="21015">MGFPKEGEKVQIHSYKHNGSIHRMWEETTILKGTQSLVIGANDRTVVTESDGRTWITREPAICYFHANYWFNVIGMLREDGVYYYCNLSSPFAYDPEALKYIDYDLDIKVYPDMTYTLLDEDEYEKHSEIMQYPPVIDTILKRNVAHLTQWIHQRKGPFAPDFVDMWYERYLMYRN</sequence>
<evidence type="ECO:0000255" key="1">
    <source>
        <dbReference type="HAMAP-Rule" id="MF_01568"/>
    </source>
</evidence>
<protein>
    <recommendedName>
        <fullName evidence="1">Nucleoside triphosphate/diphosphate phosphatase</fullName>
        <ecNumber evidence="1">3.6.1.15</ecNumber>
        <ecNumber evidence="1">3.6.1.6</ecNumber>
    </recommendedName>
</protein>
<dbReference type="EC" id="3.6.1.15" evidence="1"/>
<dbReference type="EC" id="3.6.1.6" evidence="1"/>
<dbReference type="EMBL" id="AE016877">
    <property type="protein sequence ID" value="AAP07546.1"/>
    <property type="molecule type" value="Genomic_DNA"/>
</dbReference>
<dbReference type="RefSeq" id="NP_830345.1">
    <property type="nucleotide sequence ID" value="NC_004722.1"/>
</dbReference>
<dbReference type="RefSeq" id="WP_000506622.1">
    <property type="nucleotide sequence ID" value="NZ_CP138336.1"/>
</dbReference>
<dbReference type="SMR" id="Q81I89"/>
<dbReference type="STRING" id="226900.BC_0508"/>
<dbReference type="KEGG" id="bce:BC0508"/>
<dbReference type="PATRIC" id="fig|226900.8.peg.482"/>
<dbReference type="HOGENOM" id="CLU_109787_1_0_9"/>
<dbReference type="OrthoDB" id="1645325at2"/>
<dbReference type="Proteomes" id="UP000001417">
    <property type="component" value="Chromosome"/>
</dbReference>
<dbReference type="GO" id="GO:0000287">
    <property type="term" value="F:magnesium ion binding"/>
    <property type="evidence" value="ECO:0007669"/>
    <property type="project" value="UniProtKB-UniRule"/>
</dbReference>
<dbReference type="GO" id="GO:0017110">
    <property type="term" value="F:nucleoside diphosphate phosphatase activity"/>
    <property type="evidence" value="ECO:0007669"/>
    <property type="project" value="UniProtKB-UniRule"/>
</dbReference>
<dbReference type="GO" id="GO:0017111">
    <property type="term" value="F:ribonucleoside triphosphate phosphatase activity"/>
    <property type="evidence" value="ECO:0007669"/>
    <property type="project" value="UniProtKB-UniRule"/>
</dbReference>
<dbReference type="Gene3D" id="2.40.380.10">
    <property type="entry name" value="FomD-like"/>
    <property type="match status" value="1"/>
</dbReference>
<dbReference type="HAMAP" id="MF_01568">
    <property type="entry name" value="Ntdp"/>
    <property type="match status" value="1"/>
</dbReference>
<dbReference type="InterPro" id="IPR007295">
    <property type="entry name" value="DUF402"/>
</dbReference>
<dbReference type="InterPro" id="IPR035930">
    <property type="entry name" value="FomD-like_sf"/>
</dbReference>
<dbReference type="InterPro" id="IPR050212">
    <property type="entry name" value="Ntdp-like"/>
</dbReference>
<dbReference type="InterPro" id="IPR016882">
    <property type="entry name" value="SA1684"/>
</dbReference>
<dbReference type="NCBIfam" id="NF010183">
    <property type="entry name" value="PRK13662.1"/>
    <property type="match status" value="1"/>
</dbReference>
<dbReference type="PANTHER" id="PTHR39159">
    <property type="match status" value="1"/>
</dbReference>
<dbReference type="PANTHER" id="PTHR39159:SF1">
    <property type="entry name" value="UPF0374 PROTEIN YGAC"/>
    <property type="match status" value="1"/>
</dbReference>
<dbReference type="Pfam" id="PF04167">
    <property type="entry name" value="DUF402"/>
    <property type="match status" value="1"/>
</dbReference>
<dbReference type="PIRSF" id="PIRSF028345">
    <property type="entry name" value="UCP028345"/>
    <property type="match status" value="1"/>
</dbReference>
<dbReference type="SUPFAM" id="SSF159234">
    <property type="entry name" value="FomD-like"/>
    <property type="match status" value="1"/>
</dbReference>
<comment type="function">
    <text evidence="1">Has nucleoside phosphatase activity towards nucleoside triphosphates and nucleoside diphosphates.</text>
</comment>
<comment type="catalytic activity">
    <reaction evidence="1">
        <text>a ribonucleoside 5'-triphosphate + H2O = a ribonucleoside 5'-diphosphate + phosphate + H(+)</text>
        <dbReference type="Rhea" id="RHEA:23680"/>
        <dbReference type="ChEBI" id="CHEBI:15377"/>
        <dbReference type="ChEBI" id="CHEBI:15378"/>
        <dbReference type="ChEBI" id="CHEBI:43474"/>
        <dbReference type="ChEBI" id="CHEBI:57930"/>
        <dbReference type="ChEBI" id="CHEBI:61557"/>
        <dbReference type="EC" id="3.6.1.15"/>
    </reaction>
</comment>
<comment type="catalytic activity">
    <reaction evidence="1">
        <text>a ribonucleoside 5'-diphosphate + H2O = a ribonucleoside 5'-phosphate + phosphate + H(+)</text>
        <dbReference type="Rhea" id="RHEA:36799"/>
        <dbReference type="ChEBI" id="CHEBI:15377"/>
        <dbReference type="ChEBI" id="CHEBI:15378"/>
        <dbReference type="ChEBI" id="CHEBI:43474"/>
        <dbReference type="ChEBI" id="CHEBI:57930"/>
        <dbReference type="ChEBI" id="CHEBI:58043"/>
        <dbReference type="EC" id="3.6.1.6"/>
    </reaction>
</comment>
<comment type="cofactor">
    <cofactor evidence="1">
        <name>Mg(2+)</name>
        <dbReference type="ChEBI" id="CHEBI:18420"/>
    </cofactor>
</comment>
<comment type="similarity">
    <text evidence="1">Belongs to the Ntdp family.</text>
</comment>
<keyword id="KW-0378">Hydrolase</keyword>
<keyword id="KW-0460">Magnesium</keyword>
<keyword id="KW-0479">Metal-binding</keyword>
<keyword id="KW-1185">Reference proteome</keyword>
<reference key="1">
    <citation type="journal article" date="2003" name="Nature">
        <title>Genome sequence of Bacillus cereus and comparative analysis with Bacillus anthracis.</title>
        <authorList>
            <person name="Ivanova N."/>
            <person name="Sorokin A."/>
            <person name="Anderson I."/>
            <person name="Galleron N."/>
            <person name="Candelon B."/>
            <person name="Kapatral V."/>
            <person name="Bhattacharyya A."/>
            <person name="Reznik G."/>
            <person name="Mikhailova N."/>
            <person name="Lapidus A."/>
            <person name="Chu L."/>
            <person name="Mazur M."/>
            <person name="Goltsman E."/>
            <person name="Larsen N."/>
            <person name="D'Souza M."/>
            <person name="Walunas T."/>
            <person name="Grechkin Y."/>
            <person name="Pusch G."/>
            <person name="Haselkorn R."/>
            <person name="Fonstein M."/>
            <person name="Ehrlich S.D."/>
            <person name="Overbeek R."/>
            <person name="Kyrpides N.C."/>
        </authorList>
    </citation>
    <scope>NUCLEOTIDE SEQUENCE [LARGE SCALE GENOMIC DNA]</scope>
    <source>
        <strain>ATCC 14579 / DSM 31 / CCUG 7414 / JCM 2152 / NBRC 15305 / NCIMB 9373 / NCTC 2599 / NRRL B-3711</strain>
    </source>
</reference>
<feature type="chain" id="PRO_0000248086" description="Nucleoside triphosphate/diphosphate phosphatase">
    <location>
        <begin position="1"/>
        <end position="176"/>
    </location>
</feature>
<feature type="active site" description="Proton donor" evidence="1">
    <location>
        <position position="23"/>
    </location>
</feature>
<feature type="binding site" evidence="1">
    <location>
        <position position="87"/>
    </location>
    <ligand>
        <name>Mg(2+)</name>
        <dbReference type="ChEBI" id="CHEBI:18420"/>
        <label>1</label>
    </ligand>
</feature>
<feature type="binding site" evidence="1">
    <location>
        <position position="103"/>
    </location>
    <ligand>
        <name>Mg(2+)</name>
        <dbReference type="ChEBI" id="CHEBI:18420"/>
        <label>1</label>
    </ligand>
</feature>
<feature type="binding site" evidence="1">
    <location>
        <position position="105"/>
    </location>
    <ligand>
        <name>Mg(2+)</name>
        <dbReference type="ChEBI" id="CHEBI:18420"/>
        <label>2</label>
    </ligand>
</feature>
<feature type="binding site" evidence="1">
    <location>
        <position position="107"/>
    </location>
    <ligand>
        <name>Mg(2+)</name>
        <dbReference type="ChEBI" id="CHEBI:18420"/>
        <label>1</label>
    </ligand>
</feature>
<feature type="binding site" evidence="1">
    <location>
        <position position="107"/>
    </location>
    <ligand>
        <name>Mg(2+)</name>
        <dbReference type="ChEBI" id="CHEBI:18420"/>
        <label>2</label>
    </ligand>
</feature>
<feature type="binding site" evidence="1">
    <location>
        <position position="120"/>
    </location>
    <ligand>
        <name>Mg(2+)</name>
        <dbReference type="ChEBI" id="CHEBI:18420"/>
        <label>2</label>
    </ligand>
</feature>
<feature type="binding site" evidence="1">
    <location>
        <position position="123"/>
    </location>
    <ligand>
        <name>Mg(2+)</name>
        <dbReference type="ChEBI" id="CHEBI:18420"/>
        <label>2</label>
    </ligand>
</feature>
<proteinExistence type="inferred from homology"/>
<organism>
    <name type="scientific">Bacillus cereus (strain ATCC 14579 / DSM 31 / CCUG 7414 / JCM 2152 / NBRC 15305 / NCIMB 9373 / NCTC 2599 / NRRL B-3711)</name>
    <dbReference type="NCBI Taxonomy" id="226900"/>
    <lineage>
        <taxon>Bacteria</taxon>
        <taxon>Bacillati</taxon>
        <taxon>Bacillota</taxon>
        <taxon>Bacilli</taxon>
        <taxon>Bacillales</taxon>
        <taxon>Bacillaceae</taxon>
        <taxon>Bacillus</taxon>
        <taxon>Bacillus cereus group</taxon>
    </lineage>
</organism>
<accession>Q81I89</accession>